<accession>Q313K7</accession>
<evidence type="ECO:0000255" key="1">
    <source>
        <dbReference type="HAMAP-Rule" id="MF_00023"/>
    </source>
</evidence>
<evidence type="ECO:0000256" key="2">
    <source>
        <dbReference type="SAM" id="MobiDB-lite"/>
    </source>
</evidence>
<protein>
    <recommendedName>
        <fullName evidence="1">SsrA-binding protein</fullName>
    </recommendedName>
    <alternativeName>
        <fullName evidence="1">Small protein B</fullName>
    </alternativeName>
</protein>
<comment type="function">
    <text evidence="1">Required for rescue of stalled ribosomes mediated by trans-translation. Binds to transfer-messenger RNA (tmRNA), required for stable association of tmRNA with ribosomes. tmRNA and SmpB together mimic tRNA shape, replacing the anticodon stem-loop with SmpB. tmRNA is encoded by the ssrA gene; the 2 termini fold to resemble tRNA(Ala) and it encodes a 'tag peptide', a short internal open reading frame. During trans-translation Ala-aminoacylated tmRNA acts like a tRNA, entering the A-site of stalled ribosomes, displacing the stalled mRNA. The ribosome then switches to translate the ORF on the tmRNA; the nascent peptide is terminated with the 'tag peptide' encoded by the tmRNA and targeted for degradation. The ribosome is freed to recommence translation, which seems to be the essential function of trans-translation.</text>
</comment>
<comment type="subcellular location">
    <subcellularLocation>
        <location evidence="1">Cytoplasm</location>
    </subcellularLocation>
    <text evidence="1">The tmRNA-SmpB complex associates with stalled 70S ribosomes.</text>
</comment>
<comment type="similarity">
    <text evidence="1">Belongs to the SmpB family.</text>
</comment>
<sequence>MTKKKSSGGALIAQNKKARHLYELLEFFEAGIALAGTEVKSLRAGQVSFTDSYVTIHNNEAWIVGMHIAPYANAGYVQHDPDRDRKLLLHAREIDTLRARVEQKGLTVVPVKLYFKNSRVKLEIAVGRGKKLHDKRQDIKQRDVERETRREIMRH</sequence>
<organism>
    <name type="scientific">Oleidesulfovibrio alaskensis (strain ATCC BAA-1058 / DSM 17464 / G20)</name>
    <name type="common">Desulfovibrio alaskensis</name>
    <dbReference type="NCBI Taxonomy" id="207559"/>
    <lineage>
        <taxon>Bacteria</taxon>
        <taxon>Pseudomonadati</taxon>
        <taxon>Thermodesulfobacteriota</taxon>
        <taxon>Desulfovibrionia</taxon>
        <taxon>Desulfovibrionales</taxon>
        <taxon>Desulfovibrionaceae</taxon>
        <taxon>Oleidesulfovibrio</taxon>
    </lineage>
</organism>
<feature type="chain" id="PRO_0000331043" description="SsrA-binding protein">
    <location>
        <begin position="1"/>
        <end position="155"/>
    </location>
</feature>
<feature type="region of interest" description="Disordered" evidence="2">
    <location>
        <begin position="135"/>
        <end position="155"/>
    </location>
</feature>
<gene>
    <name evidence="1" type="primary">smpB</name>
    <name type="ordered locus">Dde_1088</name>
</gene>
<name>SSRP_OLEA2</name>
<proteinExistence type="inferred from homology"/>
<reference key="1">
    <citation type="journal article" date="2011" name="J. Bacteriol.">
        <title>Complete genome sequence and updated annotation of Desulfovibrio alaskensis G20.</title>
        <authorList>
            <person name="Hauser L.J."/>
            <person name="Land M.L."/>
            <person name="Brown S.D."/>
            <person name="Larimer F."/>
            <person name="Keller K.L."/>
            <person name="Rapp-Giles B.J."/>
            <person name="Price M.N."/>
            <person name="Lin M."/>
            <person name="Bruce D.C."/>
            <person name="Detter J.C."/>
            <person name="Tapia R."/>
            <person name="Han C.S."/>
            <person name="Goodwin L.A."/>
            <person name="Cheng J.F."/>
            <person name="Pitluck S."/>
            <person name="Copeland A."/>
            <person name="Lucas S."/>
            <person name="Nolan M."/>
            <person name="Lapidus A.L."/>
            <person name="Palumbo A.V."/>
            <person name="Wall J.D."/>
        </authorList>
    </citation>
    <scope>NUCLEOTIDE SEQUENCE [LARGE SCALE GENOMIC DNA]</scope>
    <source>
        <strain>ATCC BAA-1058 / DSM 17464 / G20</strain>
    </source>
</reference>
<keyword id="KW-0963">Cytoplasm</keyword>
<keyword id="KW-1185">Reference proteome</keyword>
<keyword id="KW-0694">RNA-binding</keyword>
<dbReference type="EMBL" id="CP000112">
    <property type="protein sequence ID" value="ABB37889.1"/>
    <property type="molecule type" value="Genomic_DNA"/>
</dbReference>
<dbReference type="RefSeq" id="WP_011367119.1">
    <property type="nucleotide sequence ID" value="NC_007519.1"/>
</dbReference>
<dbReference type="SMR" id="Q313K7"/>
<dbReference type="STRING" id="207559.Dde_1088"/>
<dbReference type="KEGG" id="dde:Dde_1088"/>
<dbReference type="eggNOG" id="COG0691">
    <property type="taxonomic scope" value="Bacteria"/>
</dbReference>
<dbReference type="HOGENOM" id="CLU_108953_0_1_7"/>
<dbReference type="Proteomes" id="UP000002710">
    <property type="component" value="Chromosome"/>
</dbReference>
<dbReference type="GO" id="GO:0005829">
    <property type="term" value="C:cytosol"/>
    <property type="evidence" value="ECO:0007669"/>
    <property type="project" value="TreeGrafter"/>
</dbReference>
<dbReference type="GO" id="GO:0003723">
    <property type="term" value="F:RNA binding"/>
    <property type="evidence" value="ECO:0007669"/>
    <property type="project" value="UniProtKB-UniRule"/>
</dbReference>
<dbReference type="GO" id="GO:0070929">
    <property type="term" value="P:trans-translation"/>
    <property type="evidence" value="ECO:0007669"/>
    <property type="project" value="UniProtKB-UniRule"/>
</dbReference>
<dbReference type="CDD" id="cd09294">
    <property type="entry name" value="SmpB"/>
    <property type="match status" value="1"/>
</dbReference>
<dbReference type="Gene3D" id="2.40.280.10">
    <property type="match status" value="1"/>
</dbReference>
<dbReference type="HAMAP" id="MF_00023">
    <property type="entry name" value="SmpB"/>
    <property type="match status" value="1"/>
</dbReference>
<dbReference type="InterPro" id="IPR023620">
    <property type="entry name" value="SmpB"/>
</dbReference>
<dbReference type="InterPro" id="IPR000037">
    <property type="entry name" value="SsrA-bd_prot"/>
</dbReference>
<dbReference type="InterPro" id="IPR020081">
    <property type="entry name" value="SsrA-bd_prot_CS"/>
</dbReference>
<dbReference type="NCBIfam" id="NF003843">
    <property type="entry name" value="PRK05422.1"/>
    <property type="match status" value="1"/>
</dbReference>
<dbReference type="NCBIfam" id="TIGR00086">
    <property type="entry name" value="smpB"/>
    <property type="match status" value="1"/>
</dbReference>
<dbReference type="PANTHER" id="PTHR30308:SF2">
    <property type="entry name" value="SSRA-BINDING PROTEIN"/>
    <property type="match status" value="1"/>
</dbReference>
<dbReference type="PANTHER" id="PTHR30308">
    <property type="entry name" value="TMRNA-BINDING COMPONENT OF TRANS-TRANSLATION TAGGING COMPLEX"/>
    <property type="match status" value="1"/>
</dbReference>
<dbReference type="Pfam" id="PF01668">
    <property type="entry name" value="SmpB"/>
    <property type="match status" value="1"/>
</dbReference>
<dbReference type="SUPFAM" id="SSF74982">
    <property type="entry name" value="Small protein B (SmpB)"/>
    <property type="match status" value="1"/>
</dbReference>
<dbReference type="PROSITE" id="PS01317">
    <property type="entry name" value="SSRP"/>
    <property type="match status" value="1"/>
</dbReference>